<name>TATA_SHEB2</name>
<gene>
    <name evidence="1" type="primary">tatA</name>
    <name type="ordered locus">Sbal223_0442</name>
</gene>
<feature type="chain" id="PRO_1000197905" description="Sec-independent protein translocase protein TatA">
    <location>
        <begin position="1"/>
        <end position="79"/>
    </location>
</feature>
<feature type="transmembrane region" description="Helical" evidence="1">
    <location>
        <begin position="1"/>
        <end position="21"/>
    </location>
</feature>
<feature type="region of interest" description="Disordered" evidence="2">
    <location>
        <begin position="43"/>
        <end position="79"/>
    </location>
</feature>
<feature type="compositionally biased region" description="Basic and acidic residues" evidence="2">
    <location>
        <begin position="46"/>
        <end position="57"/>
    </location>
</feature>
<feature type="compositionally biased region" description="Low complexity" evidence="2">
    <location>
        <begin position="58"/>
        <end position="67"/>
    </location>
</feature>
<feature type="compositionally biased region" description="Basic and acidic residues" evidence="2">
    <location>
        <begin position="68"/>
        <end position="79"/>
    </location>
</feature>
<reference key="1">
    <citation type="submission" date="2008-12" db="EMBL/GenBank/DDBJ databases">
        <title>Complete sequence of chromosome of Shewanella baltica OS223.</title>
        <authorList>
            <consortium name="US DOE Joint Genome Institute"/>
            <person name="Lucas S."/>
            <person name="Copeland A."/>
            <person name="Lapidus A."/>
            <person name="Glavina del Rio T."/>
            <person name="Dalin E."/>
            <person name="Tice H."/>
            <person name="Bruce D."/>
            <person name="Goodwin L."/>
            <person name="Pitluck S."/>
            <person name="Chertkov O."/>
            <person name="Meincke L."/>
            <person name="Brettin T."/>
            <person name="Detter J.C."/>
            <person name="Han C."/>
            <person name="Kuske C.R."/>
            <person name="Larimer F."/>
            <person name="Land M."/>
            <person name="Hauser L."/>
            <person name="Kyrpides N."/>
            <person name="Ovchinnikova G."/>
            <person name="Brettar I."/>
            <person name="Rodrigues J."/>
            <person name="Konstantinidis K."/>
            <person name="Tiedje J."/>
        </authorList>
    </citation>
    <scope>NUCLEOTIDE SEQUENCE [LARGE SCALE GENOMIC DNA]</scope>
    <source>
        <strain>OS223</strain>
    </source>
</reference>
<evidence type="ECO:0000255" key="1">
    <source>
        <dbReference type="HAMAP-Rule" id="MF_00236"/>
    </source>
</evidence>
<evidence type="ECO:0000256" key="2">
    <source>
        <dbReference type="SAM" id="MobiDB-lite"/>
    </source>
</evidence>
<proteinExistence type="inferred from homology"/>
<sequence length="79" mass="8420">MGGISIWQLLIVALIVVLLFGTKKLRSLGGDLGGAVKGFKNAMSSEEDKKALEDTEAAKTAQTTQQATEKKPESNKEQA</sequence>
<accession>B8E6B3</accession>
<keyword id="KW-0997">Cell inner membrane</keyword>
<keyword id="KW-1003">Cell membrane</keyword>
<keyword id="KW-0472">Membrane</keyword>
<keyword id="KW-0653">Protein transport</keyword>
<keyword id="KW-0811">Translocation</keyword>
<keyword id="KW-0812">Transmembrane</keyword>
<keyword id="KW-1133">Transmembrane helix</keyword>
<keyword id="KW-0813">Transport</keyword>
<protein>
    <recommendedName>
        <fullName evidence="1">Sec-independent protein translocase protein TatA</fullName>
    </recommendedName>
</protein>
<dbReference type="EMBL" id="CP001252">
    <property type="protein sequence ID" value="ACK44976.1"/>
    <property type="molecule type" value="Genomic_DNA"/>
</dbReference>
<dbReference type="RefSeq" id="WP_006083329.1">
    <property type="nucleotide sequence ID" value="NC_011663.1"/>
</dbReference>
<dbReference type="SMR" id="B8E6B3"/>
<dbReference type="GeneID" id="11770767"/>
<dbReference type="KEGG" id="sbp:Sbal223_0442"/>
<dbReference type="HOGENOM" id="CLU_086034_5_1_6"/>
<dbReference type="Proteomes" id="UP000002507">
    <property type="component" value="Chromosome"/>
</dbReference>
<dbReference type="GO" id="GO:0033281">
    <property type="term" value="C:TAT protein transport complex"/>
    <property type="evidence" value="ECO:0007669"/>
    <property type="project" value="UniProtKB-UniRule"/>
</dbReference>
<dbReference type="GO" id="GO:0008320">
    <property type="term" value="F:protein transmembrane transporter activity"/>
    <property type="evidence" value="ECO:0007669"/>
    <property type="project" value="UniProtKB-UniRule"/>
</dbReference>
<dbReference type="GO" id="GO:0043953">
    <property type="term" value="P:protein transport by the Tat complex"/>
    <property type="evidence" value="ECO:0007669"/>
    <property type="project" value="UniProtKB-UniRule"/>
</dbReference>
<dbReference type="Gene3D" id="1.20.5.3310">
    <property type="match status" value="1"/>
</dbReference>
<dbReference type="HAMAP" id="MF_00236">
    <property type="entry name" value="TatA_E"/>
    <property type="match status" value="1"/>
</dbReference>
<dbReference type="InterPro" id="IPR003369">
    <property type="entry name" value="TatA/B/E"/>
</dbReference>
<dbReference type="InterPro" id="IPR006312">
    <property type="entry name" value="TatA/E"/>
</dbReference>
<dbReference type="NCBIfam" id="NF002813">
    <property type="entry name" value="PRK02958.1"/>
    <property type="match status" value="1"/>
</dbReference>
<dbReference type="NCBIfam" id="TIGR01411">
    <property type="entry name" value="tatAE"/>
    <property type="match status" value="1"/>
</dbReference>
<dbReference type="PANTHER" id="PTHR42982">
    <property type="entry name" value="SEC-INDEPENDENT PROTEIN TRANSLOCASE PROTEIN TATA"/>
    <property type="match status" value="1"/>
</dbReference>
<dbReference type="PANTHER" id="PTHR42982:SF1">
    <property type="entry name" value="SEC-INDEPENDENT PROTEIN TRANSLOCASE PROTEIN TATA"/>
    <property type="match status" value="1"/>
</dbReference>
<dbReference type="Pfam" id="PF02416">
    <property type="entry name" value="TatA_B_E"/>
    <property type="match status" value="1"/>
</dbReference>
<organism>
    <name type="scientific">Shewanella baltica (strain OS223)</name>
    <dbReference type="NCBI Taxonomy" id="407976"/>
    <lineage>
        <taxon>Bacteria</taxon>
        <taxon>Pseudomonadati</taxon>
        <taxon>Pseudomonadota</taxon>
        <taxon>Gammaproteobacteria</taxon>
        <taxon>Alteromonadales</taxon>
        <taxon>Shewanellaceae</taxon>
        <taxon>Shewanella</taxon>
    </lineage>
</organism>
<comment type="function">
    <text evidence="1">Part of the twin-arginine translocation (Tat) system that transports large folded proteins containing a characteristic twin-arginine motif in their signal peptide across membranes. TatA could form the protein-conducting channel of the Tat system.</text>
</comment>
<comment type="subunit">
    <text evidence="1">The Tat system comprises two distinct complexes: a TatABC complex, containing multiple copies of TatA, TatB and TatC subunits, and a separate TatA complex, containing only TatA subunits. Substrates initially bind to the TatABC complex, which probably triggers association of the separate TatA complex to form the active translocon.</text>
</comment>
<comment type="subcellular location">
    <subcellularLocation>
        <location evidence="1">Cell inner membrane</location>
        <topology evidence="1">Single-pass membrane protein</topology>
    </subcellularLocation>
</comment>
<comment type="similarity">
    <text evidence="1">Belongs to the TatA/E family.</text>
</comment>